<gene>
    <name evidence="1" type="primary">mnmE</name>
    <name evidence="1" type="synonym">trmE</name>
    <name type="ordered locus">HPAG1_1378</name>
</gene>
<keyword id="KW-0963">Cytoplasm</keyword>
<keyword id="KW-0342">GTP-binding</keyword>
<keyword id="KW-0378">Hydrolase</keyword>
<keyword id="KW-0460">Magnesium</keyword>
<keyword id="KW-0479">Metal-binding</keyword>
<keyword id="KW-0547">Nucleotide-binding</keyword>
<keyword id="KW-0630">Potassium</keyword>
<keyword id="KW-0819">tRNA processing</keyword>
<comment type="function">
    <text evidence="1">Exhibits a very high intrinsic GTPase hydrolysis rate. Involved in the addition of a carboxymethylaminomethyl (cmnm) group at the wobble position (U34) of certain tRNAs, forming tRNA-cmnm(5)s(2)U34.</text>
</comment>
<comment type="cofactor">
    <cofactor evidence="1">
        <name>K(+)</name>
        <dbReference type="ChEBI" id="CHEBI:29103"/>
    </cofactor>
    <text evidence="1">Binds 1 potassium ion per subunit.</text>
</comment>
<comment type="subunit">
    <text evidence="1">Homodimer. Heterotetramer of two MnmE and two MnmG subunits.</text>
</comment>
<comment type="subcellular location">
    <subcellularLocation>
        <location evidence="1">Cytoplasm</location>
    </subcellularLocation>
</comment>
<comment type="similarity">
    <text evidence="1">Belongs to the TRAFAC class TrmE-Era-EngA-EngB-Septin-like GTPase superfamily. TrmE GTPase family.</text>
</comment>
<dbReference type="EC" id="3.6.-.-" evidence="1"/>
<dbReference type="EMBL" id="CP000241">
    <property type="protein sequence ID" value="ABF85445.1"/>
    <property type="molecule type" value="Genomic_DNA"/>
</dbReference>
<dbReference type="SMR" id="Q1CRH7"/>
<dbReference type="KEGG" id="hpa:HPAG1_1378"/>
<dbReference type="HOGENOM" id="CLU_019624_4_1_7"/>
<dbReference type="GO" id="GO:0005829">
    <property type="term" value="C:cytosol"/>
    <property type="evidence" value="ECO:0007669"/>
    <property type="project" value="TreeGrafter"/>
</dbReference>
<dbReference type="GO" id="GO:0005525">
    <property type="term" value="F:GTP binding"/>
    <property type="evidence" value="ECO:0007669"/>
    <property type="project" value="UniProtKB-UniRule"/>
</dbReference>
<dbReference type="GO" id="GO:0003924">
    <property type="term" value="F:GTPase activity"/>
    <property type="evidence" value="ECO:0007669"/>
    <property type="project" value="UniProtKB-UniRule"/>
</dbReference>
<dbReference type="GO" id="GO:0046872">
    <property type="term" value="F:metal ion binding"/>
    <property type="evidence" value="ECO:0007669"/>
    <property type="project" value="UniProtKB-KW"/>
</dbReference>
<dbReference type="GO" id="GO:0030488">
    <property type="term" value="P:tRNA methylation"/>
    <property type="evidence" value="ECO:0007669"/>
    <property type="project" value="TreeGrafter"/>
</dbReference>
<dbReference type="GO" id="GO:0002098">
    <property type="term" value="P:tRNA wobble uridine modification"/>
    <property type="evidence" value="ECO:0007669"/>
    <property type="project" value="TreeGrafter"/>
</dbReference>
<dbReference type="CDD" id="cd04164">
    <property type="entry name" value="trmE"/>
    <property type="match status" value="1"/>
</dbReference>
<dbReference type="CDD" id="cd14858">
    <property type="entry name" value="TrmE_N"/>
    <property type="match status" value="1"/>
</dbReference>
<dbReference type="FunFam" id="3.30.1360.120:FF:000003">
    <property type="entry name" value="tRNA modification GTPase MnmE"/>
    <property type="match status" value="1"/>
</dbReference>
<dbReference type="FunFam" id="3.40.50.300:FF:001376">
    <property type="entry name" value="tRNA modification GTPase MnmE"/>
    <property type="match status" value="1"/>
</dbReference>
<dbReference type="Gene3D" id="3.40.50.300">
    <property type="entry name" value="P-loop containing nucleotide triphosphate hydrolases"/>
    <property type="match status" value="1"/>
</dbReference>
<dbReference type="Gene3D" id="3.30.1360.120">
    <property type="entry name" value="Probable tRNA modification gtpase trme, domain 1"/>
    <property type="match status" value="1"/>
</dbReference>
<dbReference type="Gene3D" id="1.20.120.430">
    <property type="entry name" value="tRNA modification GTPase MnmE domain 2"/>
    <property type="match status" value="1"/>
</dbReference>
<dbReference type="HAMAP" id="MF_00379">
    <property type="entry name" value="GTPase_MnmE"/>
    <property type="match status" value="1"/>
</dbReference>
<dbReference type="InterPro" id="IPR031168">
    <property type="entry name" value="G_TrmE"/>
</dbReference>
<dbReference type="InterPro" id="IPR006073">
    <property type="entry name" value="GTP-bd"/>
</dbReference>
<dbReference type="InterPro" id="IPR018948">
    <property type="entry name" value="GTP-bd_TrmE_N"/>
</dbReference>
<dbReference type="InterPro" id="IPR004520">
    <property type="entry name" value="GTPase_MnmE"/>
</dbReference>
<dbReference type="InterPro" id="IPR027368">
    <property type="entry name" value="MnmE_dom2"/>
</dbReference>
<dbReference type="InterPro" id="IPR025867">
    <property type="entry name" value="MnmE_helical"/>
</dbReference>
<dbReference type="InterPro" id="IPR027417">
    <property type="entry name" value="P-loop_NTPase"/>
</dbReference>
<dbReference type="InterPro" id="IPR005225">
    <property type="entry name" value="Small_GTP-bd"/>
</dbReference>
<dbReference type="InterPro" id="IPR027266">
    <property type="entry name" value="TrmE/GcvT_dom1"/>
</dbReference>
<dbReference type="NCBIfam" id="TIGR00450">
    <property type="entry name" value="mnmE_trmE_thdF"/>
    <property type="match status" value="1"/>
</dbReference>
<dbReference type="NCBIfam" id="TIGR00231">
    <property type="entry name" value="small_GTP"/>
    <property type="match status" value="1"/>
</dbReference>
<dbReference type="PANTHER" id="PTHR42714">
    <property type="entry name" value="TRNA MODIFICATION GTPASE GTPBP3"/>
    <property type="match status" value="1"/>
</dbReference>
<dbReference type="PANTHER" id="PTHR42714:SF2">
    <property type="entry name" value="TRNA MODIFICATION GTPASE GTPBP3, MITOCHONDRIAL"/>
    <property type="match status" value="1"/>
</dbReference>
<dbReference type="Pfam" id="PF01926">
    <property type="entry name" value="MMR_HSR1"/>
    <property type="match status" value="1"/>
</dbReference>
<dbReference type="Pfam" id="PF12631">
    <property type="entry name" value="MnmE_helical"/>
    <property type="match status" value="1"/>
</dbReference>
<dbReference type="Pfam" id="PF10396">
    <property type="entry name" value="TrmE_N"/>
    <property type="match status" value="1"/>
</dbReference>
<dbReference type="SUPFAM" id="SSF52540">
    <property type="entry name" value="P-loop containing nucleoside triphosphate hydrolases"/>
    <property type="match status" value="1"/>
</dbReference>
<dbReference type="PROSITE" id="PS51709">
    <property type="entry name" value="G_TRME"/>
    <property type="match status" value="1"/>
</dbReference>
<accession>Q1CRH7</accession>
<sequence>MKNTSSSTTLTMNDTIAAIATPSGKGAISIIKISGHNALNILKQLTKKQDFTPRYAYVRDIFSDGVLLDKALVIYFKAPYSFTGEDVCEIQCHGSPLLAQNILQACLNLGARLAKAGEFSKKAFLNHKMDLSEIEASVQLILCEDESVLNALARQLKGELKIFIEEARSDLLKLLASSEVLIDYSEEDIPSDFLKEVSFNLEKQIASFKDLLDFSNAQKQKNKGHALSIVGKPNAGKSSLLNAMLLEERALVSDIKGTTRDTIEEVIELKGHKVRLIDTAGIRESADKIERLGIEKSLKSLENCDIILGVFDLSKPLEKEDFTIIDALNRAKKPCIVVLNKNDLAPKLELEILKSHLKIPYSILETNTLNSKACLKDLGQKISAFFPKLDTQNKLLLTSLAQKTALENAITELQNAKNHLETLELFSYHLLSAIENLNSLTRPYETSQMLDSMFSEFCLGK</sequence>
<feature type="chain" id="PRO_1000048835" description="tRNA modification GTPase MnmE">
    <location>
        <begin position="1"/>
        <end position="461"/>
    </location>
</feature>
<feature type="domain" description="TrmE-type G">
    <location>
        <begin position="224"/>
        <end position="387"/>
    </location>
</feature>
<feature type="binding site" evidence="1">
    <location>
        <position position="32"/>
    </location>
    <ligand>
        <name>(6S)-5-formyl-5,6,7,8-tetrahydrofolate</name>
        <dbReference type="ChEBI" id="CHEBI:57457"/>
    </ligand>
</feature>
<feature type="binding site" evidence="1">
    <location>
        <position position="89"/>
    </location>
    <ligand>
        <name>(6S)-5-formyl-5,6,7,8-tetrahydrofolate</name>
        <dbReference type="ChEBI" id="CHEBI:57457"/>
    </ligand>
</feature>
<feature type="binding site" evidence="1">
    <location>
        <position position="128"/>
    </location>
    <ligand>
        <name>(6S)-5-formyl-5,6,7,8-tetrahydrofolate</name>
        <dbReference type="ChEBI" id="CHEBI:57457"/>
    </ligand>
</feature>
<feature type="binding site" evidence="1">
    <location>
        <begin position="234"/>
        <end position="239"/>
    </location>
    <ligand>
        <name>GTP</name>
        <dbReference type="ChEBI" id="CHEBI:37565"/>
    </ligand>
</feature>
<feature type="binding site" evidence="1">
    <location>
        <position position="234"/>
    </location>
    <ligand>
        <name>K(+)</name>
        <dbReference type="ChEBI" id="CHEBI:29103"/>
    </ligand>
</feature>
<feature type="binding site" evidence="1">
    <location>
        <position position="238"/>
    </location>
    <ligand>
        <name>Mg(2+)</name>
        <dbReference type="ChEBI" id="CHEBI:18420"/>
    </ligand>
</feature>
<feature type="binding site" evidence="1">
    <location>
        <begin position="253"/>
        <end position="259"/>
    </location>
    <ligand>
        <name>GTP</name>
        <dbReference type="ChEBI" id="CHEBI:37565"/>
    </ligand>
</feature>
<feature type="binding site" evidence="1">
    <location>
        <position position="253"/>
    </location>
    <ligand>
        <name>K(+)</name>
        <dbReference type="ChEBI" id="CHEBI:29103"/>
    </ligand>
</feature>
<feature type="binding site" evidence="1">
    <location>
        <position position="255"/>
    </location>
    <ligand>
        <name>K(+)</name>
        <dbReference type="ChEBI" id="CHEBI:29103"/>
    </ligand>
</feature>
<feature type="binding site" evidence="1">
    <location>
        <position position="258"/>
    </location>
    <ligand>
        <name>K(+)</name>
        <dbReference type="ChEBI" id="CHEBI:29103"/>
    </ligand>
</feature>
<feature type="binding site" evidence="1">
    <location>
        <position position="259"/>
    </location>
    <ligand>
        <name>Mg(2+)</name>
        <dbReference type="ChEBI" id="CHEBI:18420"/>
    </ligand>
</feature>
<feature type="binding site" evidence="1">
    <location>
        <begin position="278"/>
        <end position="281"/>
    </location>
    <ligand>
        <name>GTP</name>
        <dbReference type="ChEBI" id="CHEBI:37565"/>
    </ligand>
</feature>
<feature type="binding site" evidence="1">
    <location>
        <position position="461"/>
    </location>
    <ligand>
        <name>(6S)-5-formyl-5,6,7,8-tetrahydrofolate</name>
        <dbReference type="ChEBI" id="CHEBI:57457"/>
    </ligand>
</feature>
<name>MNME_HELPH</name>
<evidence type="ECO:0000255" key="1">
    <source>
        <dbReference type="HAMAP-Rule" id="MF_00379"/>
    </source>
</evidence>
<reference key="1">
    <citation type="journal article" date="2006" name="Proc. Natl. Acad. Sci. U.S.A.">
        <title>The complete genome sequence of a chronic atrophic gastritis Helicobacter pylori strain: evolution during disease progression.</title>
        <authorList>
            <person name="Oh J.D."/>
            <person name="Kling-Baeckhed H."/>
            <person name="Giannakis M."/>
            <person name="Xu J."/>
            <person name="Fulton R.S."/>
            <person name="Fulton L.A."/>
            <person name="Cordum H.S."/>
            <person name="Wang C."/>
            <person name="Elliott G."/>
            <person name="Edwards J."/>
            <person name="Mardis E.R."/>
            <person name="Engstrand L.G."/>
            <person name="Gordon J.I."/>
        </authorList>
    </citation>
    <scope>NUCLEOTIDE SEQUENCE [LARGE SCALE GENOMIC DNA]</scope>
    <source>
        <strain>HPAG1</strain>
    </source>
</reference>
<organism>
    <name type="scientific">Helicobacter pylori (strain HPAG1)</name>
    <dbReference type="NCBI Taxonomy" id="357544"/>
    <lineage>
        <taxon>Bacteria</taxon>
        <taxon>Pseudomonadati</taxon>
        <taxon>Campylobacterota</taxon>
        <taxon>Epsilonproteobacteria</taxon>
        <taxon>Campylobacterales</taxon>
        <taxon>Helicobacteraceae</taxon>
        <taxon>Helicobacter</taxon>
    </lineage>
</organism>
<proteinExistence type="inferred from homology"/>
<protein>
    <recommendedName>
        <fullName evidence="1">tRNA modification GTPase MnmE</fullName>
        <ecNumber evidence="1">3.6.-.-</ecNumber>
    </recommendedName>
</protein>